<proteinExistence type="inferred from homology"/>
<accession>O13215</accession>
<name>IHH_DEVMA</name>
<dbReference type="EMBL" id="U51380">
    <property type="protein sequence ID" value="AAB38605.1"/>
    <property type="molecule type" value="Genomic_DNA"/>
</dbReference>
<dbReference type="SMR" id="O13215"/>
<dbReference type="GO" id="GO:0005615">
    <property type="term" value="C:extracellular space"/>
    <property type="evidence" value="ECO:0007669"/>
    <property type="project" value="TreeGrafter"/>
</dbReference>
<dbReference type="GO" id="GO:0005886">
    <property type="term" value="C:plasma membrane"/>
    <property type="evidence" value="ECO:0007669"/>
    <property type="project" value="UniProtKB-SubCell"/>
</dbReference>
<dbReference type="GO" id="GO:0005509">
    <property type="term" value="F:calcium ion binding"/>
    <property type="evidence" value="ECO:0007669"/>
    <property type="project" value="TreeGrafter"/>
</dbReference>
<dbReference type="GO" id="GO:0005113">
    <property type="term" value="F:patched binding"/>
    <property type="evidence" value="ECO:0007669"/>
    <property type="project" value="TreeGrafter"/>
</dbReference>
<dbReference type="GO" id="GO:0008233">
    <property type="term" value="F:peptidase activity"/>
    <property type="evidence" value="ECO:0007669"/>
    <property type="project" value="UniProtKB-KW"/>
</dbReference>
<dbReference type="GO" id="GO:0001708">
    <property type="term" value="P:cell fate specification"/>
    <property type="evidence" value="ECO:0007669"/>
    <property type="project" value="TreeGrafter"/>
</dbReference>
<dbReference type="GO" id="GO:0007267">
    <property type="term" value="P:cell-cell signaling"/>
    <property type="evidence" value="ECO:0007669"/>
    <property type="project" value="InterPro"/>
</dbReference>
<dbReference type="GO" id="GO:0006508">
    <property type="term" value="P:proteolysis"/>
    <property type="evidence" value="ECO:0007669"/>
    <property type="project" value="UniProtKB-KW"/>
</dbReference>
<dbReference type="GO" id="GO:0010468">
    <property type="term" value="P:regulation of gene expression"/>
    <property type="evidence" value="ECO:0007669"/>
    <property type="project" value="TreeGrafter"/>
</dbReference>
<dbReference type="GO" id="GO:0007224">
    <property type="term" value="P:smoothened signaling pathway"/>
    <property type="evidence" value="ECO:0007669"/>
    <property type="project" value="TreeGrafter"/>
</dbReference>
<dbReference type="Gene3D" id="3.30.1380.10">
    <property type="match status" value="1"/>
</dbReference>
<dbReference type="InterPro" id="IPR001657">
    <property type="entry name" value="Hedgehog"/>
</dbReference>
<dbReference type="InterPro" id="IPR009045">
    <property type="entry name" value="Hedgehog_sig/DD-Pept_Zn-bd_sf"/>
</dbReference>
<dbReference type="InterPro" id="IPR050387">
    <property type="entry name" value="Hedgehog_Signaling"/>
</dbReference>
<dbReference type="InterPro" id="IPR000320">
    <property type="entry name" value="Hedgehog_signalling_dom"/>
</dbReference>
<dbReference type="PANTHER" id="PTHR11889">
    <property type="entry name" value="HEDGEHOG"/>
    <property type="match status" value="1"/>
</dbReference>
<dbReference type="PANTHER" id="PTHR11889:SF39">
    <property type="entry name" value="INDIAN HEDGEHOG PROTEIN"/>
    <property type="match status" value="1"/>
</dbReference>
<dbReference type="Pfam" id="PF01085">
    <property type="entry name" value="HH_signal"/>
    <property type="match status" value="1"/>
</dbReference>
<dbReference type="PRINTS" id="PR00632">
    <property type="entry name" value="SONICHHOG"/>
</dbReference>
<dbReference type="SUPFAM" id="SSF55166">
    <property type="entry name" value="Hedgehog/DD-peptidase"/>
    <property type="match status" value="1"/>
</dbReference>
<comment type="function">
    <text evidence="1">Intercellular signal essential for a variety of patterning events during development.</text>
</comment>
<comment type="subcellular location">
    <subcellularLocation>
        <location evidence="1">Cell membrane</location>
    </subcellularLocation>
    <subcellularLocation>
        <location evidence="1">Secreted</location>
        <location evidence="1">Extracellular space</location>
    </subcellularLocation>
    <text evidence="1">Indian hedgehog protein N-product: Cell membrane; Lipid-anchor; Extracellular side. The N-terminal peptide remains associated with the cell surface. Indian hedgehog protein C-product: Secreted, extracellular space. The C-terminal peptide diffuses from the cell.</text>
</comment>
<comment type="domain">
    <text evidence="1">The indian hedgehog protein N-product binds calcium and zinc ions; this stabilizes the protein fold and is essential for protein-protein interactions mediated by this domain.</text>
</comment>
<comment type="PTM">
    <text evidence="1">The C-terminal domain displays an autoproteolysis activity and a cholesterol transferase activity. Both activities result in the cleavage of the full-length protein and covalent attachment of a cholesterol moiety to the C-terminal of the newly generated N-terminal fragment (N-product). The N-product is the active species in both local and long-range signaling, whereas the C-product has no signaling activity (By similarity).</text>
</comment>
<comment type="PTM">
    <text evidence="1">Cholesterylation is required for N-product targeting to lipid rafts and multimerization.</text>
</comment>
<comment type="PTM">
    <text evidence="1">N-palmitoylation is required for N-product multimerization and full activity.</text>
</comment>
<comment type="similarity">
    <text evidence="3">Belongs to the hedgehog family.</text>
</comment>
<sequence>VMNLWPGIRLRVTEGWDEDGHHSEESLHYEGRAVDITTEDRDRNKYAMLARLAVEAGF</sequence>
<evidence type="ECO:0000250" key="1"/>
<evidence type="ECO:0000250" key="2">
    <source>
        <dbReference type="UniProtKB" id="Q14623"/>
    </source>
</evidence>
<evidence type="ECO:0000305" key="3"/>
<reference key="1">
    <citation type="journal article" date="1996" name="Proc. Natl. Acad. Sci. U.S.A.">
        <title>Evolutionary analyses of hedgehog and Hoxd-10 genes in fish species closely related to the zebrafish.</title>
        <authorList>
            <person name="Zardoya R."/>
            <person name="Abouheif E."/>
            <person name="Meyer A."/>
        </authorList>
    </citation>
    <scope>NUCLEOTIDE SEQUENCE [GENOMIC DNA]</scope>
    <source>
        <tissue>Muscle</tissue>
    </source>
</reference>
<protein>
    <recommendedName>
        <fullName>Indian hedgehog protein</fullName>
        <shortName>IHH</shortName>
    </recommendedName>
</protein>
<organism>
    <name type="scientific">Devario malabaricus</name>
    <name type="common">Malabar danio</name>
    <name type="synonym">Danio malabaricus</name>
    <dbReference type="NCBI Taxonomy" id="46780"/>
    <lineage>
        <taxon>Eukaryota</taxon>
        <taxon>Metazoa</taxon>
        <taxon>Chordata</taxon>
        <taxon>Craniata</taxon>
        <taxon>Vertebrata</taxon>
        <taxon>Euteleostomi</taxon>
        <taxon>Actinopterygii</taxon>
        <taxon>Neopterygii</taxon>
        <taxon>Teleostei</taxon>
        <taxon>Ostariophysi</taxon>
        <taxon>Cypriniformes</taxon>
        <taxon>Danionidae</taxon>
        <taxon>Danioninae</taxon>
        <taxon>Devario</taxon>
    </lineage>
</organism>
<gene>
    <name type="primary">ihh</name>
</gene>
<keyword id="KW-0068">Autocatalytic cleavage</keyword>
<keyword id="KW-0106">Calcium</keyword>
<keyword id="KW-1003">Cell membrane</keyword>
<keyword id="KW-0217">Developmental protein</keyword>
<keyword id="KW-0378">Hydrolase</keyword>
<keyword id="KW-0449">Lipoprotein</keyword>
<keyword id="KW-0472">Membrane</keyword>
<keyword id="KW-0479">Metal-binding</keyword>
<keyword id="KW-0564">Palmitate</keyword>
<keyword id="KW-0645">Protease</keyword>
<keyword id="KW-0964">Secreted</keyword>
<keyword id="KW-0862">Zinc</keyword>
<feature type="chain" id="PRO_0000058744" description="Indian hedgehog protein">
    <location>
        <begin position="1" status="less than"/>
        <end position="58" status="greater than"/>
    </location>
</feature>
<feature type="binding site" evidence="2">
    <location>
        <position position="13"/>
    </location>
    <ligand>
        <name>Ca(2+)</name>
        <dbReference type="ChEBI" id="CHEBI:29108"/>
        <label>1</label>
    </ligand>
</feature>
<feature type="binding site" evidence="2">
    <location>
        <position position="14"/>
    </location>
    <ligand>
        <name>Ca(2+)</name>
        <dbReference type="ChEBI" id="CHEBI:29108"/>
        <label>1</label>
    </ligand>
</feature>
<feature type="binding site" evidence="2">
    <location>
        <position position="14"/>
    </location>
    <ligand>
        <name>Ca(2+)</name>
        <dbReference type="ChEBI" id="CHEBI:29108"/>
        <label>2</label>
    </ligand>
</feature>
<feature type="binding site" evidence="2">
    <location>
        <position position="17"/>
    </location>
    <ligand>
        <name>Ca(2+)</name>
        <dbReference type="ChEBI" id="CHEBI:29108"/>
        <label>2</label>
    </ligand>
</feature>
<feature type="binding site" evidence="2">
    <location>
        <position position="19"/>
    </location>
    <ligand>
        <name>Ca(2+)</name>
        <dbReference type="ChEBI" id="CHEBI:29108"/>
        <label>2</label>
    </ligand>
</feature>
<feature type="binding site" evidence="2">
    <location>
        <position position="28"/>
    </location>
    <ligand>
        <name>Zn(2+)</name>
        <dbReference type="ChEBI" id="CHEBI:29105"/>
    </ligand>
</feature>
<feature type="binding site" evidence="2">
    <location>
        <position position="35"/>
    </location>
    <ligand>
        <name>Zn(2+)</name>
        <dbReference type="ChEBI" id="CHEBI:29105"/>
    </ligand>
</feature>
<feature type="non-terminal residue">
    <location>
        <position position="1"/>
    </location>
</feature>
<feature type="non-terminal residue">
    <location>
        <position position="58"/>
    </location>
</feature>